<gene>
    <name evidence="1" type="primary">leuA</name>
    <name type="ordered locus">ABO_2437</name>
</gene>
<protein>
    <recommendedName>
        <fullName evidence="1">2-isopropylmalate synthase</fullName>
        <ecNumber evidence="1">2.3.3.13</ecNumber>
    </recommendedName>
    <alternativeName>
        <fullName evidence="1">Alpha-IPM synthase</fullName>
    </alternativeName>
    <alternativeName>
        <fullName evidence="1">Alpha-isopropylmalate synthase</fullName>
    </alternativeName>
</protein>
<reference key="1">
    <citation type="journal article" date="2006" name="Nat. Biotechnol.">
        <title>Genome sequence of the ubiquitous hydrocarbon-degrading marine bacterium Alcanivorax borkumensis.</title>
        <authorList>
            <person name="Schneiker S."/>
            <person name="Martins dos Santos V.A.P."/>
            <person name="Bartels D."/>
            <person name="Bekel T."/>
            <person name="Brecht M."/>
            <person name="Buhrmester J."/>
            <person name="Chernikova T.N."/>
            <person name="Denaro R."/>
            <person name="Ferrer M."/>
            <person name="Gertler C."/>
            <person name="Goesmann A."/>
            <person name="Golyshina O.V."/>
            <person name="Kaminski F."/>
            <person name="Khachane A.N."/>
            <person name="Lang S."/>
            <person name="Linke B."/>
            <person name="McHardy A.C."/>
            <person name="Meyer F."/>
            <person name="Nechitaylo T."/>
            <person name="Puehler A."/>
            <person name="Regenhardt D."/>
            <person name="Rupp O."/>
            <person name="Sabirova J.S."/>
            <person name="Selbitschka W."/>
            <person name="Yakimov M.M."/>
            <person name="Timmis K.N."/>
            <person name="Vorhoelter F.-J."/>
            <person name="Weidner S."/>
            <person name="Kaiser O."/>
            <person name="Golyshin P.N."/>
        </authorList>
    </citation>
    <scope>NUCLEOTIDE SEQUENCE [LARGE SCALE GENOMIC DNA]</scope>
    <source>
        <strain>ATCC 700651 / DSM 11573 / NCIMB 13689 / SK2</strain>
    </source>
</reference>
<evidence type="ECO:0000255" key="1">
    <source>
        <dbReference type="HAMAP-Rule" id="MF_00572"/>
    </source>
</evidence>
<accession>Q0VLR3</accession>
<proteinExistence type="inferred from homology"/>
<dbReference type="EC" id="2.3.3.13" evidence="1"/>
<dbReference type="EMBL" id="AM286690">
    <property type="protein sequence ID" value="CAL17885.1"/>
    <property type="molecule type" value="Genomic_DNA"/>
</dbReference>
<dbReference type="RefSeq" id="WP_011589711.1">
    <property type="nucleotide sequence ID" value="NC_008260.1"/>
</dbReference>
<dbReference type="SMR" id="Q0VLR3"/>
<dbReference type="STRING" id="393595.ABO_2437"/>
<dbReference type="KEGG" id="abo:ABO_2437"/>
<dbReference type="eggNOG" id="COG0119">
    <property type="taxonomic scope" value="Bacteria"/>
</dbReference>
<dbReference type="HOGENOM" id="CLU_004588_3_0_6"/>
<dbReference type="OrthoDB" id="9803573at2"/>
<dbReference type="UniPathway" id="UPA00048">
    <property type="reaction ID" value="UER00070"/>
</dbReference>
<dbReference type="Proteomes" id="UP000008871">
    <property type="component" value="Chromosome"/>
</dbReference>
<dbReference type="GO" id="GO:0005737">
    <property type="term" value="C:cytoplasm"/>
    <property type="evidence" value="ECO:0007669"/>
    <property type="project" value="UniProtKB-SubCell"/>
</dbReference>
<dbReference type="GO" id="GO:0003852">
    <property type="term" value="F:2-isopropylmalate synthase activity"/>
    <property type="evidence" value="ECO:0007669"/>
    <property type="project" value="UniProtKB-UniRule"/>
</dbReference>
<dbReference type="GO" id="GO:0003985">
    <property type="term" value="F:acetyl-CoA C-acetyltransferase activity"/>
    <property type="evidence" value="ECO:0007669"/>
    <property type="project" value="UniProtKB-UniRule"/>
</dbReference>
<dbReference type="GO" id="GO:0000287">
    <property type="term" value="F:magnesium ion binding"/>
    <property type="evidence" value="ECO:0007669"/>
    <property type="project" value="UniProtKB-UniRule"/>
</dbReference>
<dbReference type="GO" id="GO:0009098">
    <property type="term" value="P:L-leucine biosynthetic process"/>
    <property type="evidence" value="ECO:0007669"/>
    <property type="project" value="UniProtKB-UniRule"/>
</dbReference>
<dbReference type="CDD" id="cd07942">
    <property type="entry name" value="DRE_TIM_LeuA"/>
    <property type="match status" value="1"/>
</dbReference>
<dbReference type="Gene3D" id="3.30.160.270">
    <property type="match status" value="1"/>
</dbReference>
<dbReference type="Gene3D" id="3.20.20.70">
    <property type="entry name" value="Aldolase class I"/>
    <property type="match status" value="1"/>
</dbReference>
<dbReference type="HAMAP" id="MF_00572">
    <property type="entry name" value="LeuA_type2"/>
    <property type="match status" value="1"/>
</dbReference>
<dbReference type="InterPro" id="IPR013709">
    <property type="entry name" value="2-isopropylmalate_synth_dimer"/>
</dbReference>
<dbReference type="InterPro" id="IPR002034">
    <property type="entry name" value="AIPM/Hcit_synth_CS"/>
</dbReference>
<dbReference type="InterPro" id="IPR013785">
    <property type="entry name" value="Aldolase_TIM"/>
</dbReference>
<dbReference type="InterPro" id="IPR005668">
    <property type="entry name" value="IPM_Synthase"/>
</dbReference>
<dbReference type="InterPro" id="IPR054692">
    <property type="entry name" value="LeuA-like_post-cat"/>
</dbReference>
<dbReference type="InterPro" id="IPR036230">
    <property type="entry name" value="LeuA_allosteric_dom_sf"/>
</dbReference>
<dbReference type="InterPro" id="IPR039371">
    <property type="entry name" value="LeuA_N_DRE-TIM"/>
</dbReference>
<dbReference type="InterPro" id="IPR000891">
    <property type="entry name" value="PYR_CT"/>
</dbReference>
<dbReference type="NCBIfam" id="NF002991">
    <property type="entry name" value="PRK03739.1"/>
    <property type="match status" value="1"/>
</dbReference>
<dbReference type="PANTHER" id="PTHR46911">
    <property type="match status" value="1"/>
</dbReference>
<dbReference type="PANTHER" id="PTHR46911:SF1">
    <property type="entry name" value="2-ISOPROPYLMALATE SYNTHASE"/>
    <property type="match status" value="1"/>
</dbReference>
<dbReference type="Pfam" id="PF00682">
    <property type="entry name" value="HMGL-like"/>
    <property type="match status" value="1"/>
</dbReference>
<dbReference type="Pfam" id="PF22615">
    <property type="entry name" value="IPMS_D2"/>
    <property type="match status" value="1"/>
</dbReference>
<dbReference type="Pfam" id="PF08502">
    <property type="entry name" value="LeuA_dimer"/>
    <property type="match status" value="1"/>
</dbReference>
<dbReference type="SMART" id="SM00917">
    <property type="entry name" value="LeuA_dimer"/>
    <property type="match status" value="1"/>
</dbReference>
<dbReference type="SUPFAM" id="SSF110921">
    <property type="entry name" value="2-isopropylmalate synthase LeuA, allosteric (dimerisation) domain"/>
    <property type="match status" value="1"/>
</dbReference>
<dbReference type="SUPFAM" id="SSF51569">
    <property type="entry name" value="Aldolase"/>
    <property type="match status" value="1"/>
</dbReference>
<dbReference type="SUPFAM" id="SSF89000">
    <property type="entry name" value="post-HMGL domain-like"/>
    <property type="match status" value="1"/>
</dbReference>
<dbReference type="PROSITE" id="PS00815">
    <property type="entry name" value="AIPM_HOMOCIT_SYNTH_1"/>
    <property type="match status" value="1"/>
</dbReference>
<dbReference type="PROSITE" id="PS00816">
    <property type="entry name" value="AIPM_HOMOCIT_SYNTH_2"/>
    <property type="match status" value="1"/>
</dbReference>
<dbReference type="PROSITE" id="PS50991">
    <property type="entry name" value="PYR_CT"/>
    <property type="match status" value="1"/>
</dbReference>
<keyword id="KW-0028">Amino-acid biosynthesis</keyword>
<keyword id="KW-0100">Branched-chain amino acid biosynthesis</keyword>
<keyword id="KW-0963">Cytoplasm</keyword>
<keyword id="KW-0432">Leucine biosynthesis</keyword>
<keyword id="KW-0460">Magnesium</keyword>
<keyword id="KW-0479">Metal-binding</keyword>
<keyword id="KW-1185">Reference proteome</keyword>
<keyword id="KW-0808">Transferase</keyword>
<feature type="chain" id="PRO_0000406869" description="2-isopropylmalate synthase">
    <location>
        <begin position="1"/>
        <end position="559"/>
    </location>
</feature>
<feature type="domain" description="Pyruvate carboxyltransferase" evidence="1">
    <location>
        <begin position="30"/>
        <end position="304"/>
    </location>
</feature>
<feature type="region of interest" description="Regulatory domain" evidence="1">
    <location>
        <begin position="436"/>
        <end position="559"/>
    </location>
</feature>
<feature type="binding site" evidence="1">
    <location>
        <position position="39"/>
    </location>
    <ligand>
        <name>Mg(2+)</name>
        <dbReference type="ChEBI" id="CHEBI:18420"/>
    </ligand>
</feature>
<feature type="binding site" evidence="1">
    <location>
        <position position="243"/>
    </location>
    <ligand>
        <name>Mg(2+)</name>
        <dbReference type="ChEBI" id="CHEBI:18420"/>
    </ligand>
</feature>
<feature type="binding site" evidence="1">
    <location>
        <position position="245"/>
    </location>
    <ligand>
        <name>Mg(2+)</name>
        <dbReference type="ChEBI" id="CHEBI:18420"/>
    </ligand>
</feature>
<feature type="binding site" evidence="1">
    <location>
        <position position="279"/>
    </location>
    <ligand>
        <name>Mg(2+)</name>
        <dbReference type="ChEBI" id="CHEBI:18420"/>
    </ligand>
</feature>
<name>LEU1_ALCBS</name>
<sequence length="559" mass="61822">MSFDHRKYRPVAVIDKPDRRWPNQRIEKAPLWAAVDLRDGNQALIKPMSVAQKRRFFQMLVELGFKEIEVGFPSASQIDFDFCRALIEEDLVPDDVHIQVLTQAREDLIARTFDSLKGAKNAIVHIYNATSPTFREQVFNVDKAGCKAIAVRAAEWVKENAAKQPDTHWSFQYSPETFSATETDFAIEVIDAVNAVWRPDQGQRVIINLPATVEVSTPNVFADQVEMVHDNIQYRDDVIISVHTHDDRGCGVAAAEMAVMAGADRVEGTLLGNGERTGNMDLVTAGMNLYSQGIDPGIDFSRMKEIVALVEEITDIQTHPRHPYAGDLVFSAFSGSHQDAIRKCLARYQEGDIWTAAYLPIDPADVGRRYEEVVRINSQSGKGGVAHVLERDFGIDLPRWLQQELAGVVQGDAEEDGGEITSERVHRRFNSDYLNVPMGWVLRSYDLNRSNEQVQAQISIGDDRQPVTLLSGRGDGAMSALVDALNRRIGGEVKVVSFDEYSLGDNTEANAMACVRVQVGDSTQSAVAMAVDTTAAALQAILSAVGRMQETSEQLIANS</sequence>
<organism>
    <name type="scientific">Alcanivorax borkumensis (strain ATCC 700651 / DSM 11573 / NCIMB 13689 / SK2)</name>
    <dbReference type="NCBI Taxonomy" id="393595"/>
    <lineage>
        <taxon>Bacteria</taxon>
        <taxon>Pseudomonadati</taxon>
        <taxon>Pseudomonadota</taxon>
        <taxon>Gammaproteobacteria</taxon>
        <taxon>Oceanospirillales</taxon>
        <taxon>Alcanivoracaceae</taxon>
        <taxon>Alcanivorax</taxon>
    </lineage>
</organism>
<comment type="function">
    <text evidence="1">Catalyzes the condensation of the acetyl group of acetyl-CoA with 3-methyl-2-oxobutanoate (2-ketoisovalerate) to form 3-carboxy-3-hydroxy-4-methylpentanoate (2-isopropylmalate).</text>
</comment>
<comment type="catalytic activity">
    <reaction evidence="1">
        <text>3-methyl-2-oxobutanoate + acetyl-CoA + H2O = (2S)-2-isopropylmalate + CoA + H(+)</text>
        <dbReference type="Rhea" id="RHEA:21524"/>
        <dbReference type="ChEBI" id="CHEBI:1178"/>
        <dbReference type="ChEBI" id="CHEBI:11851"/>
        <dbReference type="ChEBI" id="CHEBI:15377"/>
        <dbReference type="ChEBI" id="CHEBI:15378"/>
        <dbReference type="ChEBI" id="CHEBI:57287"/>
        <dbReference type="ChEBI" id="CHEBI:57288"/>
        <dbReference type="EC" id="2.3.3.13"/>
    </reaction>
</comment>
<comment type="cofactor">
    <cofactor evidence="1">
        <name>Mg(2+)</name>
        <dbReference type="ChEBI" id="CHEBI:18420"/>
    </cofactor>
</comment>
<comment type="pathway">
    <text evidence="1">Amino-acid biosynthesis; L-leucine biosynthesis; L-leucine from 3-methyl-2-oxobutanoate: step 1/4.</text>
</comment>
<comment type="subunit">
    <text evidence="1">Homodimer.</text>
</comment>
<comment type="subcellular location">
    <subcellularLocation>
        <location evidence="1">Cytoplasm</location>
    </subcellularLocation>
</comment>
<comment type="similarity">
    <text evidence="1">Belongs to the alpha-IPM synthase/homocitrate synthase family. LeuA type 2 subfamily.</text>
</comment>